<sequence length="184" mass="19997">MFSSKENSLGAKRAPFSSNTTSSQRVAAQAAKRASSGAFAQLTSSQIQELKEAFALLDKDGDGNIGREDVKTMLTSLNQDASEDSINHMFESINPPINLAAFLTAMGSMLCRISPRNDLLEAFSTFDDTQSGKIPISTMRDALSSMGDRMDPQEVESILRSYTSHGVFYYEKFVDAIAGSKDSN</sequence>
<gene>
    <name type="primary">rlc1</name>
    <name type="ORF">SPAC926.03</name>
</gene>
<comment type="subunit">
    <text>Binds to myosin II chains myo2 and myo3.</text>
</comment>
<comment type="subcellular location">
    <subcellularLocation>
        <location>Cytoplasm</location>
    </subcellularLocation>
</comment>
<comment type="miscellaneous">
    <text evidence="4">This chain binds calcium.</text>
</comment>
<keyword id="KW-0106">Calcium</keyword>
<keyword id="KW-0963">Cytoplasm</keyword>
<keyword id="KW-0479">Metal-binding</keyword>
<keyword id="KW-0505">Motor protein</keyword>
<keyword id="KW-0518">Myosin</keyword>
<keyword id="KW-0597">Phosphoprotein</keyword>
<keyword id="KW-1185">Reference proteome</keyword>
<keyword id="KW-0677">Repeat</keyword>
<proteinExistence type="evidence at protein level"/>
<name>MLR1_SCHPO</name>
<evidence type="ECO:0000255" key="1">
    <source>
        <dbReference type="PROSITE-ProRule" id="PRU00448"/>
    </source>
</evidence>
<evidence type="ECO:0000256" key="2">
    <source>
        <dbReference type="SAM" id="MobiDB-lite"/>
    </source>
</evidence>
<evidence type="ECO:0000269" key="3">
    <source>
    </source>
</evidence>
<evidence type="ECO:0000305" key="4"/>
<feature type="chain" id="PRO_0000198764" description="Myosin regulatory light chain 1">
    <location>
        <begin position="1"/>
        <end position="184"/>
    </location>
</feature>
<feature type="domain" description="EF-hand 1" evidence="1">
    <location>
        <begin position="45"/>
        <end position="80"/>
    </location>
</feature>
<feature type="domain" description="EF-hand 2" evidence="1">
    <location>
        <begin position="114"/>
        <end position="149"/>
    </location>
</feature>
<feature type="region of interest" description="Disordered" evidence="2">
    <location>
        <begin position="1"/>
        <end position="29"/>
    </location>
</feature>
<feature type="binding site" evidence="1">
    <location>
        <position position="58"/>
    </location>
    <ligand>
        <name>Ca(2+)</name>
        <dbReference type="ChEBI" id="CHEBI:29108"/>
    </ligand>
</feature>
<feature type="binding site" evidence="1">
    <location>
        <position position="60"/>
    </location>
    <ligand>
        <name>Ca(2+)</name>
        <dbReference type="ChEBI" id="CHEBI:29108"/>
    </ligand>
</feature>
<feature type="binding site" evidence="1">
    <location>
        <position position="62"/>
    </location>
    <ligand>
        <name>Ca(2+)</name>
        <dbReference type="ChEBI" id="CHEBI:29108"/>
    </ligand>
</feature>
<feature type="binding site" evidence="1">
    <location>
        <position position="64"/>
    </location>
    <ligand>
        <name>Ca(2+)</name>
        <dbReference type="ChEBI" id="CHEBI:29108"/>
    </ligand>
</feature>
<feature type="binding site" evidence="1">
    <location>
        <position position="69"/>
    </location>
    <ligand>
        <name>Ca(2+)</name>
        <dbReference type="ChEBI" id="CHEBI:29108"/>
    </ligand>
</feature>
<feature type="modified residue" description="Phosphoserine" evidence="3">
    <location>
        <position position="36"/>
    </location>
</feature>
<dbReference type="EMBL" id="CU329670">
    <property type="protein sequence ID" value="CAB54151.1"/>
    <property type="molecule type" value="Genomic_DNA"/>
</dbReference>
<dbReference type="PIR" id="T39201">
    <property type="entry name" value="T39201"/>
</dbReference>
<dbReference type="RefSeq" id="NP_594364.1">
    <property type="nucleotide sequence ID" value="NM_001019785.2"/>
</dbReference>
<dbReference type="SMR" id="Q9UUG5"/>
<dbReference type="BioGRID" id="279962">
    <property type="interactions" value="20"/>
</dbReference>
<dbReference type="FunCoup" id="Q9UUG5">
    <property type="interactions" value="41"/>
</dbReference>
<dbReference type="STRING" id="284812.Q9UUG5"/>
<dbReference type="iPTMnet" id="Q9UUG5"/>
<dbReference type="PaxDb" id="4896-SPAC926.03.1"/>
<dbReference type="EnsemblFungi" id="SPAC926.03.1">
    <property type="protein sequence ID" value="SPAC926.03.1:pep"/>
    <property type="gene ID" value="SPAC926.03"/>
</dbReference>
<dbReference type="GeneID" id="2543545"/>
<dbReference type="KEGG" id="spo:2543545"/>
<dbReference type="PomBase" id="SPAC926.03">
    <property type="gene designation" value="rlc1"/>
</dbReference>
<dbReference type="VEuPathDB" id="FungiDB:SPAC926.03"/>
<dbReference type="eggNOG" id="KOG0031">
    <property type="taxonomic scope" value="Eukaryota"/>
</dbReference>
<dbReference type="HOGENOM" id="CLU_061288_9_2_1"/>
<dbReference type="InParanoid" id="Q9UUG5"/>
<dbReference type="OMA" id="GVNFTMF"/>
<dbReference type="PhylomeDB" id="Q9UUG5"/>
<dbReference type="Reactome" id="R-SPO-5627123">
    <property type="pathway name" value="RHO GTPases activate PAKs"/>
</dbReference>
<dbReference type="PRO" id="PR:Q9UUG5"/>
<dbReference type="Proteomes" id="UP000002485">
    <property type="component" value="Chromosome I"/>
</dbReference>
<dbReference type="GO" id="GO:0005737">
    <property type="term" value="C:cytoplasm"/>
    <property type="evidence" value="ECO:0000314"/>
    <property type="project" value="PomBase"/>
</dbReference>
<dbReference type="GO" id="GO:0005829">
    <property type="term" value="C:cytosol"/>
    <property type="evidence" value="ECO:0007005"/>
    <property type="project" value="PomBase"/>
</dbReference>
<dbReference type="GO" id="GO:0071341">
    <property type="term" value="C:medial cortical node"/>
    <property type="evidence" value="ECO:0000314"/>
    <property type="project" value="PomBase"/>
</dbReference>
<dbReference type="GO" id="GO:0110085">
    <property type="term" value="C:mitotic actomyosin contractile ring"/>
    <property type="evidence" value="ECO:0000314"/>
    <property type="project" value="PomBase"/>
</dbReference>
<dbReference type="GO" id="GO:0120106">
    <property type="term" value="C:mitotic actomyosin contractile ring, distal actin filament layer"/>
    <property type="evidence" value="ECO:0000314"/>
    <property type="project" value="PomBase"/>
</dbReference>
<dbReference type="GO" id="GO:0016460">
    <property type="term" value="C:myosin II complex"/>
    <property type="evidence" value="ECO:0000353"/>
    <property type="project" value="PomBase"/>
</dbReference>
<dbReference type="GO" id="GO:0005634">
    <property type="term" value="C:nucleus"/>
    <property type="evidence" value="ECO:0007005"/>
    <property type="project" value="PomBase"/>
</dbReference>
<dbReference type="GO" id="GO:0005509">
    <property type="term" value="F:calcium ion binding"/>
    <property type="evidence" value="ECO:0000255"/>
    <property type="project" value="PomBase"/>
</dbReference>
<dbReference type="GO" id="GO:0140659">
    <property type="term" value="F:cytoskeletal motor regulator activity"/>
    <property type="evidence" value="ECO:0000269"/>
    <property type="project" value="PomBase"/>
</dbReference>
<dbReference type="GO" id="GO:0017022">
    <property type="term" value="F:myosin binding"/>
    <property type="evidence" value="ECO:0000353"/>
    <property type="project" value="PomBase"/>
</dbReference>
<dbReference type="GO" id="GO:0032036">
    <property type="term" value="F:myosin heavy chain binding"/>
    <property type="evidence" value="ECO:0000318"/>
    <property type="project" value="GO_Central"/>
</dbReference>
<dbReference type="GO" id="GO:0031032">
    <property type="term" value="P:actomyosin structure organization"/>
    <property type="evidence" value="ECO:0000318"/>
    <property type="project" value="GO_Central"/>
</dbReference>
<dbReference type="GO" id="GO:1902404">
    <property type="term" value="P:mitotic actomyosin contractile ring contraction"/>
    <property type="evidence" value="ECO:0000315"/>
    <property type="project" value="PomBase"/>
</dbReference>
<dbReference type="GO" id="GO:0000281">
    <property type="term" value="P:mitotic cytokinesis"/>
    <property type="evidence" value="ECO:0000318"/>
    <property type="project" value="GO_Central"/>
</dbReference>
<dbReference type="CDD" id="cd00051">
    <property type="entry name" value="EFh"/>
    <property type="match status" value="1"/>
</dbReference>
<dbReference type="FunFam" id="1.10.238.10:FF:000178">
    <property type="entry name" value="Calmodulin-2 A"/>
    <property type="match status" value="1"/>
</dbReference>
<dbReference type="Gene3D" id="1.10.238.10">
    <property type="entry name" value="EF-hand"/>
    <property type="match status" value="2"/>
</dbReference>
<dbReference type="InterPro" id="IPR011992">
    <property type="entry name" value="EF-hand-dom_pair"/>
</dbReference>
<dbReference type="InterPro" id="IPR018247">
    <property type="entry name" value="EF_Hand_1_Ca_BS"/>
</dbReference>
<dbReference type="InterPro" id="IPR002048">
    <property type="entry name" value="EF_hand_dom"/>
</dbReference>
<dbReference type="InterPro" id="IPR050403">
    <property type="entry name" value="Myosin_RLC"/>
</dbReference>
<dbReference type="PANTHER" id="PTHR23049">
    <property type="entry name" value="MYOSIN REGULATORY LIGHT CHAIN 2"/>
    <property type="match status" value="1"/>
</dbReference>
<dbReference type="Pfam" id="PF13499">
    <property type="entry name" value="EF-hand_7"/>
    <property type="match status" value="1"/>
</dbReference>
<dbReference type="SMART" id="SM00054">
    <property type="entry name" value="EFh"/>
    <property type="match status" value="2"/>
</dbReference>
<dbReference type="SUPFAM" id="SSF47473">
    <property type="entry name" value="EF-hand"/>
    <property type="match status" value="1"/>
</dbReference>
<dbReference type="PROSITE" id="PS00018">
    <property type="entry name" value="EF_HAND_1"/>
    <property type="match status" value="1"/>
</dbReference>
<dbReference type="PROSITE" id="PS50222">
    <property type="entry name" value="EF_HAND_2"/>
    <property type="match status" value="2"/>
</dbReference>
<reference key="1">
    <citation type="journal article" date="2002" name="Nature">
        <title>The genome sequence of Schizosaccharomyces pombe.</title>
        <authorList>
            <person name="Wood V."/>
            <person name="Gwilliam R."/>
            <person name="Rajandream M.A."/>
            <person name="Lyne M.H."/>
            <person name="Lyne R."/>
            <person name="Stewart A."/>
            <person name="Sgouros J.G."/>
            <person name="Peat N."/>
            <person name="Hayles J."/>
            <person name="Baker S.G."/>
            <person name="Basham D."/>
            <person name="Bowman S."/>
            <person name="Brooks K."/>
            <person name="Brown D."/>
            <person name="Brown S."/>
            <person name="Chillingworth T."/>
            <person name="Churcher C.M."/>
            <person name="Collins M."/>
            <person name="Connor R."/>
            <person name="Cronin A."/>
            <person name="Davis P."/>
            <person name="Feltwell T."/>
            <person name="Fraser A."/>
            <person name="Gentles S."/>
            <person name="Goble A."/>
            <person name="Hamlin N."/>
            <person name="Harris D.E."/>
            <person name="Hidalgo J."/>
            <person name="Hodgson G."/>
            <person name="Holroyd S."/>
            <person name="Hornsby T."/>
            <person name="Howarth S."/>
            <person name="Huckle E.J."/>
            <person name="Hunt S."/>
            <person name="Jagels K."/>
            <person name="James K.D."/>
            <person name="Jones L."/>
            <person name="Jones M."/>
            <person name="Leather S."/>
            <person name="McDonald S."/>
            <person name="McLean J."/>
            <person name="Mooney P."/>
            <person name="Moule S."/>
            <person name="Mungall K.L."/>
            <person name="Murphy L.D."/>
            <person name="Niblett D."/>
            <person name="Odell C."/>
            <person name="Oliver K."/>
            <person name="O'Neil S."/>
            <person name="Pearson D."/>
            <person name="Quail M.A."/>
            <person name="Rabbinowitsch E."/>
            <person name="Rutherford K.M."/>
            <person name="Rutter S."/>
            <person name="Saunders D."/>
            <person name="Seeger K."/>
            <person name="Sharp S."/>
            <person name="Skelton J."/>
            <person name="Simmonds M.N."/>
            <person name="Squares R."/>
            <person name="Squares S."/>
            <person name="Stevens K."/>
            <person name="Taylor K."/>
            <person name="Taylor R.G."/>
            <person name="Tivey A."/>
            <person name="Walsh S.V."/>
            <person name="Warren T."/>
            <person name="Whitehead S."/>
            <person name="Woodward J.R."/>
            <person name="Volckaert G."/>
            <person name="Aert R."/>
            <person name="Robben J."/>
            <person name="Grymonprez B."/>
            <person name="Weltjens I."/>
            <person name="Vanstreels E."/>
            <person name="Rieger M."/>
            <person name="Schaefer M."/>
            <person name="Mueller-Auer S."/>
            <person name="Gabel C."/>
            <person name="Fuchs M."/>
            <person name="Duesterhoeft A."/>
            <person name="Fritzc C."/>
            <person name="Holzer E."/>
            <person name="Moestl D."/>
            <person name="Hilbert H."/>
            <person name="Borzym K."/>
            <person name="Langer I."/>
            <person name="Beck A."/>
            <person name="Lehrach H."/>
            <person name="Reinhardt R."/>
            <person name="Pohl T.M."/>
            <person name="Eger P."/>
            <person name="Zimmermann W."/>
            <person name="Wedler H."/>
            <person name="Wambutt R."/>
            <person name="Purnelle B."/>
            <person name="Goffeau A."/>
            <person name="Cadieu E."/>
            <person name="Dreano S."/>
            <person name="Gloux S."/>
            <person name="Lelaure V."/>
            <person name="Mottier S."/>
            <person name="Galibert F."/>
            <person name="Aves S.J."/>
            <person name="Xiang Z."/>
            <person name="Hunt C."/>
            <person name="Moore K."/>
            <person name="Hurst S.M."/>
            <person name="Lucas M."/>
            <person name="Rochet M."/>
            <person name="Gaillardin C."/>
            <person name="Tallada V.A."/>
            <person name="Garzon A."/>
            <person name="Thode G."/>
            <person name="Daga R.R."/>
            <person name="Cruzado L."/>
            <person name="Jimenez J."/>
            <person name="Sanchez M."/>
            <person name="del Rey F."/>
            <person name="Benito J."/>
            <person name="Dominguez A."/>
            <person name="Revuelta J.L."/>
            <person name="Moreno S."/>
            <person name="Armstrong J."/>
            <person name="Forsburg S.L."/>
            <person name="Cerutti L."/>
            <person name="Lowe T."/>
            <person name="McCombie W.R."/>
            <person name="Paulsen I."/>
            <person name="Potashkin J."/>
            <person name="Shpakovski G.V."/>
            <person name="Ussery D."/>
            <person name="Barrell B.G."/>
            <person name="Nurse P."/>
        </authorList>
    </citation>
    <scope>NUCLEOTIDE SEQUENCE [LARGE SCALE GENOMIC DNA]</scope>
    <source>
        <strain>972 / ATCC 24843</strain>
    </source>
</reference>
<reference key="2">
    <citation type="journal article" date="2000" name="J. Cell Sci.">
        <title>The S. pombe rlc1 gene encodes a putative myosin regulatory light chain that binds the type II myosins myo3p and myo2p.</title>
        <authorList>
            <person name="Le Goff X."/>
            <person name="Motegi F."/>
            <person name="Salimova E."/>
            <person name="Mabuchi I."/>
            <person name="Simanis V."/>
        </authorList>
    </citation>
    <scope>IDENTIFICATION</scope>
    <scope>CHARACTERIZATION</scope>
</reference>
<reference key="3">
    <citation type="journal article" date="2008" name="J. Proteome Res.">
        <title>Phosphoproteome analysis of fission yeast.</title>
        <authorList>
            <person name="Wilson-Grady J.T."/>
            <person name="Villen J."/>
            <person name="Gygi S.P."/>
        </authorList>
    </citation>
    <scope>PHOSPHORYLATION [LARGE SCALE ANALYSIS] AT SER-36</scope>
    <scope>IDENTIFICATION BY MASS SPECTROMETRY</scope>
</reference>
<organism>
    <name type="scientific">Schizosaccharomyces pombe (strain 972 / ATCC 24843)</name>
    <name type="common">Fission yeast</name>
    <dbReference type="NCBI Taxonomy" id="284812"/>
    <lineage>
        <taxon>Eukaryota</taxon>
        <taxon>Fungi</taxon>
        <taxon>Dikarya</taxon>
        <taxon>Ascomycota</taxon>
        <taxon>Taphrinomycotina</taxon>
        <taxon>Schizosaccharomycetes</taxon>
        <taxon>Schizosaccharomycetales</taxon>
        <taxon>Schizosaccharomycetaceae</taxon>
        <taxon>Schizosaccharomyces</taxon>
    </lineage>
</organism>
<accession>Q9UUG5</accession>
<protein>
    <recommendedName>
        <fullName>Myosin regulatory light chain 1</fullName>
    </recommendedName>
</protein>